<comment type="subcellular location">
    <subcellularLocation>
        <location>Nucleus</location>
    </subcellularLocation>
    <subcellularLocation>
        <location>Chromosome</location>
    </subcellularLocation>
    <text>Micronuclei.</text>
</comment>
<comment type="PTM">
    <text evidence="3">All four histones are processed from the precursor molecule.</text>
</comment>
<comment type="PTM">
    <text>Phosphorylated in growing and dividing cells but not in nongrowing (starved) cells.</text>
</comment>
<comment type="PTM">
    <text>The N-terminus of MIC LH-alpha and MIC LH-delta is blocked.</text>
</comment>
<comment type="sequence caution" evidence="4">
    <conflict type="erroneous initiation">
        <sequence resource="EMBL-CDS" id="EAR85403"/>
    </conflict>
    <text>Extended N-terminus.</text>
</comment>
<feature type="chain" id="PRO_0000013473" description="Micronuclear linker histone-alpha">
    <location>
        <begin position="1"/>
        <end position="399"/>
    </location>
</feature>
<feature type="chain" id="PRO_0000013474" description="Micronuclear linker histone-delta">
    <location>
        <begin position="1"/>
        <end position="199"/>
    </location>
</feature>
<feature type="chain" id="PRO_0000013475" description="Micronuclear linker histone-gamma">
    <location>
        <begin position="200"/>
        <end position="399"/>
    </location>
</feature>
<feature type="chain" id="PRO_0000013476" description="Micronuclear linker histone-beta">
    <location>
        <begin position="400"/>
        <end position="633"/>
    </location>
</feature>
<feature type="DNA-binding region" description="HMG box 1" evidence="1">
    <location>
        <begin position="12"/>
        <end position="74"/>
    </location>
</feature>
<feature type="DNA-binding region" description="HMG box 2" evidence="1">
    <location>
        <begin position="96"/>
        <end position="164"/>
    </location>
</feature>
<feature type="region of interest" description="Disordered" evidence="2">
    <location>
        <begin position="170"/>
        <end position="633"/>
    </location>
</feature>
<feature type="compositionally biased region" description="Basic residues" evidence="2">
    <location>
        <begin position="174"/>
        <end position="190"/>
    </location>
</feature>
<feature type="compositionally biased region" description="Low complexity" evidence="2">
    <location>
        <begin position="212"/>
        <end position="224"/>
    </location>
</feature>
<feature type="compositionally biased region" description="Low complexity" evidence="2">
    <location>
        <begin position="253"/>
        <end position="271"/>
    </location>
</feature>
<feature type="compositionally biased region" description="Basic residues" evidence="2">
    <location>
        <begin position="272"/>
        <end position="309"/>
    </location>
</feature>
<feature type="compositionally biased region" description="Basic residues" evidence="2">
    <location>
        <begin position="330"/>
        <end position="352"/>
    </location>
</feature>
<feature type="compositionally biased region" description="Basic and acidic residues" evidence="2">
    <location>
        <begin position="353"/>
        <end position="374"/>
    </location>
</feature>
<feature type="compositionally biased region" description="Basic and acidic residues" evidence="2">
    <location>
        <begin position="382"/>
        <end position="401"/>
    </location>
</feature>
<feature type="compositionally biased region" description="Low complexity" evidence="2">
    <location>
        <begin position="406"/>
        <end position="416"/>
    </location>
</feature>
<feature type="compositionally biased region" description="Basic residues" evidence="2">
    <location>
        <begin position="417"/>
        <end position="444"/>
    </location>
</feature>
<feature type="compositionally biased region" description="Polar residues" evidence="2">
    <location>
        <begin position="446"/>
        <end position="469"/>
    </location>
</feature>
<feature type="compositionally biased region" description="Basic and acidic residues" evidence="2">
    <location>
        <begin position="478"/>
        <end position="491"/>
    </location>
</feature>
<feature type="compositionally biased region" description="Basic residues" evidence="2">
    <location>
        <begin position="496"/>
        <end position="524"/>
    </location>
</feature>
<feature type="compositionally biased region" description="Basic and acidic residues" evidence="2">
    <location>
        <begin position="540"/>
        <end position="550"/>
    </location>
</feature>
<feature type="compositionally biased region" description="Basic and acidic residues" evidence="2">
    <location>
        <begin position="559"/>
        <end position="612"/>
    </location>
</feature>
<feature type="sequence conflict" description="In Ref. 1; AAC18874." evidence="4" ref="1">
    <original>N</original>
    <variation>P</variation>
    <location>
        <position position="554"/>
    </location>
</feature>
<dbReference type="EMBL" id="M87306">
    <property type="protein sequence ID" value="AAC18874.1"/>
    <property type="molecule type" value="Unassigned_DNA"/>
</dbReference>
<dbReference type="EMBL" id="GG662622">
    <property type="protein sequence ID" value="EAR85403.2"/>
    <property type="status" value="ALT_INIT"/>
    <property type="molecule type" value="Genomic_DNA"/>
</dbReference>
<dbReference type="RefSeq" id="XP_001033066.2">
    <property type="nucleotide sequence ID" value="XM_001033066.3"/>
</dbReference>
<dbReference type="SMR" id="P40631"/>
<dbReference type="STRING" id="312017.P40631"/>
<dbReference type="EnsemblProtists" id="EAR85403">
    <property type="protein sequence ID" value="EAR85403"/>
    <property type="gene ID" value="TTHERM_00471820"/>
</dbReference>
<dbReference type="GeneID" id="7832262"/>
<dbReference type="KEGG" id="tet:TTHERM_00471820"/>
<dbReference type="eggNOG" id="ENOG502RT0M">
    <property type="taxonomic scope" value="Eukaryota"/>
</dbReference>
<dbReference type="HOGENOM" id="CLU_432478_0_0_1"/>
<dbReference type="InParanoid" id="P40631"/>
<dbReference type="OMA" id="PSPMEAN"/>
<dbReference type="OrthoDB" id="498543at2759"/>
<dbReference type="Proteomes" id="UP000009168">
    <property type="component" value="Unassembled WGS sequence"/>
</dbReference>
<dbReference type="GO" id="GO:0005694">
    <property type="term" value="C:chromosome"/>
    <property type="evidence" value="ECO:0007669"/>
    <property type="project" value="UniProtKB-SubCell"/>
</dbReference>
<dbReference type="GO" id="GO:0005634">
    <property type="term" value="C:nucleus"/>
    <property type="evidence" value="ECO:0007669"/>
    <property type="project" value="UniProtKB-SubCell"/>
</dbReference>
<dbReference type="GO" id="GO:0003677">
    <property type="term" value="F:DNA binding"/>
    <property type="evidence" value="ECO:0007669"/>
    <property type="project" value="UniProtKB-KW"/>
</dbReference>
<dbReference type="Gene3D" id="1.10.30.10">
    <property type="entry name" value="High mobility group box domain"/>
    <property type="match status" value="1"/>
</dbReference>
<dbReference type="InterPro" id="IPR009071">
    <property type="entry name" value="HMG_box_dom"/>
</dbReference>
<dbReference type="InterPro" id="IPR036910">
    <property type="entry name" value="HMG_box_dom_sf"/>
</dbReference>
<dbReference type="InterPro" id="IPR051762">
    <property type="entry name" value="UBF1"/>
</dbReference>
<dbReference type="PANTHER" id="PTHR46318:SF6">
    <property type="entry name" value="CHROMOSOME UNDETERMINED SCAFFOLD_121, WHOLE GENOME SHOTGUN SEQUENCE"/>
    <property type="match status" value="1"/>
</dbReference>
<dbReference type="PANTHER" id="PTHR46318">
    <property type="entry name" value="UPSTREAM BINDING TRANSCRIPTION FACTOR"/>
    <property type="match status" value="1"/>
</dbReference>
<dbReference type="Pfam" id="PF00505">
    <property type="entry name" value="HMG_box"/>
    <property type="match status" value="1"/>
</dbReference>
<dbReference type="SMART" id="SM00398">
    <property type="entry name" value="HMG"/>
    <property type="match status" value="2"/>
</dbReference>
<dbReference type="SUPFAM" id="SSF47095">
    <property type="entry name" value="HMG-box"/>
    <property type="match status" value="2"/>
</dbReference>
<dbReference type="PROSITE" id="PS50118">
    <property type="entry name" value="HMG_BOX_2"/>
    <property type="match status" value="1"/>
</dbReference>
<accession>P40631</accession>
<reference key="1">
    <citation type="journal article" date="1994" name="Mol. Cell. Biol.">
        <title>Four distinct and unusual linker proteins in a mitotically dividing nucleus are derived from a 71-kilodalton polyprotein, lack p34cdc2 sites, and contain protein kinase A sites.</title>
        <authorList>
            <person name="Wu M."/>
            <person name="Allis C.D."/>
            <person name="Sweet M.T."/>
            <person name="Cook R.G."/>
            <person name="Thatcher T.H."/>
            <person name="Gorovsky M.A."/>
        </authorList>
    </citation>
    <scope>NUCLEOTIDE SEQUENCE [GENOMIC DNA]</scope>
    <scope>PROTEIN SEQUENCE OF 22-44; 68-73; 87-107; 131-162; 168-227; 400-424; 486-495 AND 559-568</scope>
    <scope>PROTEOLYTIC PROCESSING</scope>
    <source>
        <strain>CU401</strain>
    </source>
</reference>
<reference key="2">
    <citation type="journal article" date="2006" name="PLoS Biol.">
        <title>Macronuclear genome sequence of the ciliate Tetrahymena thermophila, a model eukaryote.</title>
        <authorList>
            <person name="Eisen J.A."/>
            <person name="Coyne R.S."/>
            <person name="Wu M."/>
            <person name="Wu D."/>
            <person name="Thiagarajan M."/>
            <person name="Wortman J.R."/>
            <person name="Badger J.H."/>
            <person name="Ren Q."/>
            <person name="Amedeo P."/>
            <person name="Jones K.M."/>
            <person name="Tallon L.J."/>
            <person name="Delcher A.L."/>
            <person name="Salzberg S.L."/>
            <person name="Silva J.C."/>
            <person name="Haas B.J."/>
            <person name="Majoros W.H."/>
            <person name="Farzad M."/>
            <person name="Carlton J.M."/>
            <person name="Smith R.K. Jr."/>
            <person name="Garg J."/>
            <person name="Pearlman R.E."/>
            <person name="Karrer K.M."/>
            <person name="Sun L."/>
            <person name="Manning G."/>
            <person name="Elde N.C."/>
            <person name="Turkewitz A.P."/>
            <person name="Asai D.J."/>
            <person name="Wilkes D.E."/>
            <person name="Wang Y."/>
            <person name="Cai H."/>
            <person name="Collins K."/>
            <person name="Stewart B.A."/>
            <person name="Lee S.R."/>
            <person name="Wilamowska K."/>
            <person name="Weinberg Z."/>
            <person name="Ruzzo W.L."/>
            <person name="Wloga D."/>
            <person name="Gaertig J."/>
            <person name="Frankel J."/>
            <person name="Tsao C.-C."/>
            <person name="Gorovsky M.A."/>
            <person name="Keeling P.J."/>
            <person name="Waller R.F."/>
            <person name="Patron N.J."/>
            <person name="Cherry J.M."/>
            <person name="Stover N.A."/>
            <person name="Krieger C.J."/>
            <person name="del Toro C."/>
            <person name="Ryder H.F."/>
            <person name="Williamson S.C."/>
            <person name="Barbeau R.A."/>
            <person name="Hamilton E.P."/>
            <person name="Orias E."/>
        </authorList>
    </citation>
    <scope>NUCLEOTIDE SEQUENCE [LARGE SCALE GENOMIC DNA]</scope>
    <source>
        <strain>SB210</strain>
    </source>
</reference>
<evidence type="ECO:0000255" key="1">
    <source>
        <dbReference type="PROSITE-ProRule" id="PRU00267"/>
    </source>
</evidence>
<evidence type="ECO:0000256" key="2">
    <source>
        <dbReference type="SAM" id="MobiDB-lite"/>
    </source>
</evidence>
<evidence type="ECO:0000269" key="3">
    <source>
    </source>
</evidence>
<evidence type="ECO:0000305" key="4"/>
<organism>
    <name type="scientific">Tetrahymena thermophila (strain SB210)</name>
    <dbReference type="NCBI Taxonomy" id="312017"/>
    <lineage>
        <taxon>Eukaryota</taxon>
        <taxon>Sar</taxon>
        <taxon>Alveolata</taxon>
        <taxon>Ciliophora</taxon>
        <taxon>Intramacronucleata</taxon>
        <taxon>Oligohymenophorea</taxon>
        <taxon>Hymenostomatida</taxon>
        <taxon>Tetrahymenina</taxon>
        <taxon>Tetrahymenidae</taxon>
        <taxon>Tetrahymena</taxon>
    </lineage>
</organism>
<protein>
    <recommendedName>
        <fullName>Micronuclear linker histone polyprotein</fullName>
        <shortName>MIC LH</shortName>
    </recommendedName>
    <component>
        <recommendedName>
            <fullName>Micronuclear linker histone-alpha</fullName>
        </recommendedName>
    </component>
    <component>
        <recommendedName>
            <fullName>Micronuclear linker histone-beta</fullName>
        </recommendedName>
    </component>
    <component>
        <recommendedName>
            <fullName>Micronuclear linker histone-delta</fullName>
        </recommendedName>
    </component>
    <component>
        <recommendedName>
            <fullName>Micronuclear linker histone-gamma</fullName>
        </recommendedName>
    </component>
</protein>
<sequence>MELRTKTLNIQPPKKPFSNTYQAFVLEKKNALGKNFDNKKVQADYNKLSNNEKERLQKLVDNAEEKYKEELFHYNNHIQGKGKQKYVPQVKVPEKPKKPIGSFFRFLEENRQKYAAKHKDLTNAKILKIMSEDFNNLPQKEVKVYEDAYQKEYAQYLVEFKKWNEKYGQAAQKKQTKRKNSTSKSRRSSSKGKSSVSKGRTKSTSSKRRADSSASQGRSQSSSSNRRKASSSKDQKGTRSSSRKASNSKGRKNSTSNKRNSSSSSKRSSSSKNKKSSSSKNKKSSSSKGRKSSSSRGRKASSSKNRKSSKSKDRKSSSSKGRKSSSSSKSNKRKASSSRGRKSSSSKGRKSSKSQERKNSHADTSKQMEDEGQKRRQSSSSAKRDESSKKSRRNSMKEARTKKANNKSASKASKSGSKSKGKSASKSKGKSSSKGKNSKSRSASKPKSNAAQNSNNTHQTADSSENASSTTQTRTRGRQREQKDMVNEKSNSKSSSKGKKNSKSNTRSKSKSKSASKSRKNASKSKKDTTNHGRQTRSKSRSESKSKSEAPNKNSNKMEVIEQPKEESSDRKRRESRSQSAKKTSDKKSKNRSDSKKMTAEDPKKNNAEDSKGKKKSKEGKTGAYGKKANKKQ</sequence>
<name>MLH_TETTS</name>
<gene>
    <name type="primary">MLH</name>
    <name type="ORF">TTHERM_00471820</name>
</gene>
<keyword id="KW-0158">Chromosome</keyword>
<keyword id="KW-0903">Direct protein sequencing</keyword>
<keyword id="KW-0238">DNA-binding</keyword>
<keyword id="KW-0539">Nucleus</keyword>
<keyword id="KW-0597">Phosphoprotein</keyword>
<keyword id="KW-1185">Reference proteome</keyword>
<keyword id="KW-0677">Repeat</keyword>
<proteinExistence type="evidence at protein level"/>